<keyword id="KW-0520">NAD</keyword>
<keyword id="KW-0560">Oxidoreductase</keyword>
<feature type="chain" id="PRO_0000281044" description="UDP-glucose 6-dehydrogenase">
    <location>
        <begin position="1"/>
        <end position="434"/>
    </location>
</feature>
<feature type="active site" description="Nucleophile" evidence="1">
    <location>
        <position position="260"/>
    </location>
</feature>
<feature type="binding site" evidence="2">
    <location>
        <begin position="2"/>
        <end position="19"/>
    </location>
    <ligand>
        <name>NAD(+)</name>
        <dbReference type="ChEBI" id="CHEBI:57540"/>
    </ligand>
</feature>
<feature type="binding site" evidence="1">
    <location>
        <position position="11"/>
    </location>
    <ligand>
        <name>NAD(+)</name>
        <dbReference type="ChEBI" id="CHEBI:57540"/>
    </ligand>
</feature>
<feature type="binding site" evidence="1">
    <location>
        <position position="30"/>
    </location>
    <ligand>
        <name>NAD(+)</name>
        <dbReference type="ChEBI" id="CHEBI:57540"/>
    </ligand>
</feature>
<feature type="binding site" evidence="1">
    <location>
        <position position="35"/>
    </location>
    <ligand>
        <name>NAD(+)</name>
        <dbReference type="ChEBI" id="CHEBI:57540"/>
    </ligand>
</feature>
<feature type="binding site" evidence="1">
    <location>
        <position position="121"/>
    </location>
    <ligand>
        <name>NAD(+)</name>
        <dbReference type="ChEBI" id="CHEBI:57540"/>
    </ligand>
</feature>
<feature type="binding site" evidence="1">
    <location>
        <begin position="148"/>
        <end position="152"/>
    </location>
    <ligand>
        <name>substrate</name>
    </ligand>
</feature>
<feature type="binding site" evidence="1">
    <location>
        <position position="152"/>
    </location>
    <ligand>
        <name>NAD(+)</name>
        <dbReference type="ChEBI" id="CHEBI:57540"/>
    </ligand>
</feature>
<feature type="binding site" evidence="1">
    <location>
        <position position="204"/>
    </location>
    <ligand>
        <name>substrate</name>
    </ligand>
</feature>
<feature type="binding site" evidence="1">
    <location>
        <position position="208"/>
    </location>
    <ligand>
        <name>substrate</name>
    </ligand>
</feature>
<feature type="binding site" evidence="1">
    <location>
        <begin position="249"/>
        <end position="253"/>
    </location>
    <ligand>
        <name>substrate</name>
    </ligand>
</feature>
<feature type="binding site" evidence="1">
    <location>
        <position position="257"/>
    </location>
    <ligand>
        <name>substrate</name>
    </ligand>
</feature>
<feature type="binding site" evidence="1">
    <location>
        <position position="263"/>
    </location>
    <ligand>
        <name>NAD(+)</name>
        <dbReference type="ChEBI" id="CHEBI:57540"/>
    </ligand>
</feature>
<feature type="binding site" evidence="1">
    <location>
        <position position="321"/>
    </location>
    <ligand>
        <name>substrate</name>
    </ligand>
</feature>
<feature type="binding site" evidence="1">
    <location>
        <position position="328"/>
    </location>
    <ligand>
        <name>NAD(+)</name>
        <dbReference type="ChEBI" id="CHEBI:57540"/>
    </ligand>
</feature>
<organism>
    <name type="scientific">Rickettsia bellii (strain RML369-C)</name>
    <dbReference type="NCBI Taxonomy" id="336407"/>
    <lineage>
        <taxon>Bacteria</taxon>
        <taxon>Pseudomonadati</taxon>
        <taxon>Pseudomonadota</taxon>
        <taxon>Alphaproteobacteria</taxon>
        <taxon>Rickettsiales</taxon>
        <taxon>Rickettsiaceae</taxon>
        <taxon>Rickettsieae</taxon>
        <taxon>Rickettsia</taxon>
        <taxon>belli group</taxon>
    </lineage>
</organism>
<name>UDG_RICBR</name>
<accession>Q1RKF8</accession>
<reference key="1">
    <citation type="journal article" date="2006" name="PLoS Genet.">
        <title>Genome sequence of Rickettsia bellii illuminates the role of amoebae in gene exchanges between intracellular pathogens.</title>
        <authorList>
            <person name="Ogata H."/>
            <person name="La Scola B."/>
            <person name="Audic S."/>
            <person name="Renesto P."/>
            <person name="Blanc G."/>
            <person name="Robert C."/>
            <person name="Fournier P.-E."/>
            <person name="Claverie J.-M."/>
            <person name="Raoult D."/>
        </authorList>
    </citation>
    <scope>NUCLEOTIDE SEQUENCE [LARGE SCALE GENOMIC DNA]</scope>
    <source>
        <strain>RML369-C</strain>
    </source>
</reference>
<dbReference type="EC" id="1.1.1.22"/>
<dbReference type="EMBL" id="CP000087">
    <property type="protein sequence ID" value="ABE04156.1"/>
    <property type="molecule type" value="Genomic_DNA"/>
</dbReference>
<dbReference type="RefSeq" id="WP_011476771.1">
    <property type="nucleotide sequence ID" value="NC_007940.1"/>
</dbReference>
<dbReference type="SMR" id="Q1RKF8"/>
<dbReference type="KEGG" id="rbe:RBE_0075"/>
<dbReference type="eggNOG" id="COG1004">
    <property type="taxonomic scope" value="Bacteria"/>
</dbReference>
<dbReference type="HOGENOM" id="CLU_023810_1_2_5"/>
<dbReference type="OrthoDB" id="9803238at2"/>
<dbReference type="UniPathway" id="UPA00038">
    <property type="reaction ID" value="UER00491"/>
</dbReference>
<dbReference type="Proteomes" id="UP000001951">
    <property type="component" value="Chromosome"/>
</dbReference>
<dbReference type="GO" id="GO:0051287">
    <property type="term" value="F:NAD binding"/>
    <property type="evidence" value="ECO:0000250"/>
    <property type="project" value="UniProtKB"/>
</dbReference>
<dbReference type="GO" id="GO:0003979">
    <property type="term" value="F:UDP-glucose 6-dehydrogenase activity"/>
    <property type="evidence" value="ECO:0000250"/>
    <property type="project" value="UniProtKB"/>
</dbReference>
<dbReference type="GO" id="GO:0000271">
    <property type="term" value="P:polysaccharide biosynthetic process"/>
    <property type="evidence" value="ECO:0007669"/>
    <property type="project" value="InterPro"/>
</dbReference>
<dbReference type="GO" id="GO:0006065">
    <property type="term" value="P:UDP-glucuronate biosynthetic process"/>
    <property type="evidence" value="ECO:0007669"/>
    <property type="project" value="UniProtKB-UniPathway"/>
</dbReference>
<dbReference type="Gene3D" id="1.20.5.100">
    <property type="entry name" value="Cytochrome c1, transmembrane anchor, C-terminal"/>
    <property type="match status" value="1"/>
</dbReference>
<dbReference type="Gene3D" id="3.40.50.720">
    <property type="entry name" value="NAD(P)-binding Rossmann-like Domain"/>
    <property type="match status" value="2"/>
</dbReference>
<dbReference type="InterPro" id="IPR008927">
    <property type="entry name" value="6-PGluconate_DH-like_C_sf"/>
</dbReference>
<dbReference type="InterPro" id="IPR036291">
    <property type="entry name" value="NAD(P)-bd_dom_sf"/>
</dbReference>
<dbReference type="InterPro" id="IPR017476">
    <property type="entry name" value="UDP-Glc/GDP-Man"/>
</dbReference>
<dbReference type="InterPro" id="IPR014027">
    <property type="entry name" value="UDP-Glc/GDP-Man_DH_C"/>
</dbReference>
<dbReference type="InterPro" id="IPR036220">
    <property type="entry name" value="UDP-Glc/GDP-Man_DH_C_sf"/>
</dbReference>
<dbReference type="InterPro" id="IPR014026">
    <property type="entry name" value="UDP-Glc/GDP-Man_DH_dimer"/>
</dbReference>
<dbReference type="InterPro" id="IPR001732">
    <property type="entry name" value="UDP-Glc/GDP-Man_DH_N"/>
</dbReference>
<dbReference type="InterPro" id="IPR028357">
    <property type="entry name" value="UDPglc_DH_bac"/>
</dbReference>
<dbReference type="NCBIfam" id="TIGR03026">
    <property type="entry name" value="NDP-sugDHase"/>
    <property type="match status" value="1"/>
</dbReference>
<dbReference type="PANTHER" id="PTHR43750">
    <property type="entry name" value="UDP-GLUCOSE 6-DEHYDROGENASE TUAD"/>
    <property type="match status" value="1"/>
</dbReference>
<dbReference type="PANTHER" id="PTHR43750:SF3">
    <property type="entry name" value="UDP-GLUCOSE 6-DEHYDROGENASE TUAD"/>
    <property type="match status" value="1"/>
</dbReference>
<dbReference type="Pfam" id="PF00984">
    <property type="entry name" value="UDPG_MGDP_dh"/>
    <property type="match status" value="1"/>
</dbReference>
<dbReference type="Pfam" id="PF03720">
    <property type="entry name" value="UDPG_MGDP_dh_C"/>
    <property type="match status" value="1"/>
</dbReference>
<dbReference type="Pfam" id="PF03721">
    <property type="entry name" value="UDPG_MGDP_dh_N"/>
    <property type="match status" value="1"/>
</dbReference>
<dbReference type="PIRSF" id="PIRSF500134">
    <property type="entry name" value="UDPglc_DH_bac"/>
    <property type="match status" value="1"/>
</dbReference>
<dbReference type="PIRSF" id="PIRSF000124">
    <property type="entry name" value="UDPglc_GDPman_dh"/>
    <property type="match status" value="1"/>
</dbReference>
<dbReference type="SMART" id="SM00984">
    <property type="entry name" value="UDPG_MGDP_dh_C"/>
    <property type="match status" value="1"/>
</dbReference>
<dbReference type="SUPFAM" id="SSF48179">
    <property type="entry name" value="6-phosphogluconate dehydrogenase C-terminal domain-like"/>
    <property type="match status" value="1"/>
</dbReference>
<dbReference type="SUPFAM" id="SSF51735">
    <property type="entry name" value="NAD(P)-binding Rossmann-fold domains"/>
    <property type="match status" value="1"/>
</dbReference>
<dbReference type="SUPFAM" id="SSF52413">
    <property type="entry name" value="UDP-glucose/GDP-mannose dehydrogenase C-terminal domain"/>
    <property type="match status" value="1"/>
</dbReference>
<proteinExistence type="inferred from homology"/>
<comment type="catalytic activity">
    <reaction>
        <text>UDP-alpha-D-glucose + 2 NAD(+) + H2O = UDP-alpha-D-glucuronate + 2 NADH + 3 H(+)</text>
        <dbReference type="Rhea" id="RHEA:23596"/>
        <dbReference type="ChEBI" id="CHEBI:15377"/>
        <dbReference type="ChEBI" id="CHEBI:15378"/>
        <dbReference type="ChEBI" id="CHEBI:57540"/>
        <dbReference type="ChEBI" id="CHEBI:57945"/>
        <dbReference type="ChEBI" id="CHEBI:58052"/>
        <dbReference type="ChEBI" id="CHEBI:58885"/>
        <dbReference type="EC" id="1.1.1.22"/>
    </reaction>
</comment>
<comment type="pathway">
    <text>Nucleotide-sugar biosynthesis; UDP-alpha-D-glucuronate biosynthesis; UDP-alpha-D-glucuronate from UDP-alpha-D-glucose: step 1/1.</text>
</comment>
<comment type="similarity">
    <text evidence="3">Belongs to the UDP-glucose/GDP-mannose dehydrogenase family.</text>
</comment>
<evidence type="ECO:0000250" key="1">
    <source>
        <dbReference type="UniProtKB" id="Q0P8H3"/>
    </source>
</evidence>
<evidence type="ECO:0000255" key="2"/>
<evidence type="ECO:0000305" key="3"/>
<protein>
    <recommendedName>
        <fullName>UDP-glucose 6-dehydrogenase</fullName>
        <shortName>UDP-Glc dehydrogenase</shortName>
        <shortName>UDP-GlcDH</shortName>
        <shortName>UDPGDH</shortName>
        <ecNumber>1.1.1.22</ecNumber>
    </recommendedName>
</protein>
<gene>
    <name type="primary">udg</name>
    <name type="ordered locus">RBE_0075</name>
</gene>
<sequence>MNITFIGSGYVGLVSGVMMSYLGHNVTCLDNDEAKISKLNKRILPIYETKLDKYFTQALEHERLKFTSFYNEELKNTEAVFITVGTPSKASGEADLSYVYEAIDKISLHINKDCLIVIKSTVPPNSCNNIINYLKEKGFSFNVASNPEFLREGNAVEDFLYPDRIVIGVNNKESEDILRKIYMPLTDNGAELVITDLVTAELIKYGSNSFLATKIAFINEMANLCEKIGADIKNLSKGIGLDKRIGTAFLNAGPGFGGSCFPKDILALNSIIKNNYIDSKILEAVIRSNKERPSLMVDKIATLLDEDLKGKNIAVLGLTYKAGTDDVRASPAIEIIKNLLDKGTYVKAFDPMGLENSQKTFQNENLLYLDSAIKVCDSSDAIIITTEWSEFQALDWQKIYSLVKTPIIIDLRNILKADEVESIGFRYYTVGSKI</sequence>